<accession>Q54P72</accession>
<dbReference type="EC" id="3.1.3.2"/>
<dbReference type="EMBL" id="AAFI02000071">
    <property type="protein sequence ID" value="EAL65029.1"/>
    <property type="molecule type" value="Genomic_DNA"/>
</dbReference>
<dbReference type="RefSeq" id="XP_638386.1">
    <property type="nucleotide sequence ID" value="XM_633294.1"/>
</dbReference>
<dbReference type="SMR" id="Q54P72"/>
<dbReference type="FunCoup" id="Q54P72">
    <property type="interactions" value="1"/>
</dbReference>
<dbReference type="STRING" id="44689.Q54P72"/>
<dbReference type="PaxDb" id="44689-DDB0186172"/>
<dbReference type="EnsemblProtists" id="EAL65029">
    <property type="protein sequence ID" value="EAL65029"/>
    <property type="gene ID" value="DDB_G0284753"/>
</dbReference>
<dbReference type="GeneID" id="8624755"/>
<dbReference type="KEGG" id="ddi:DDB_G0284753"/>
<dbReference type="dictyBase" id="DDB_G0284753"/>
<dbReference type="VEuPathDB" id="AmoebaDB:DDB_G0284753"/>
<dbReference type="eggNOG" id="KOG3720">
    <property type="taxonomic scope" value="Eukaryota"/>
</dbReference>
<dbReference type="HOGENOM" id="CLU_030431_5_0_1"/>
<dbReference type="InParanoid" id="Q54P72"/>
<dbReference type="OMA" id="WHCDENS"/>
<dbReference type="PhylomeDB" id="Q54P72"/>
<dbReference type="Reactome" id="R-DDI-1483166">
    <property type="pathway name" value="Synthesis of PA"/>
</dbReference>
<dbReference type="Reactome" id="R-DDI-6798695">
    <property type="pathway name" value="Neutrophil degranulation"/>
</dbReference>
<dbReference type="PRO" id="PR:Q54P72"/>
<dbReference type="Proteomes" id="UP000002195">
    <property type="component" value="Chromosome 4"/>
</dbReference>
<dbReference type="GO" id="GO:0003993">
    <property type="term" value="F:acid phosphatase activity"/>
    <property type="evidence" value="ECO:0007669"/>
    <property type="project" value="UniProtKB-EC"/>
</dbReference>
<dbReference type="GO" id="GO:0016791">
    <property type="term" value="F:phosphatase activity"/>
    <property type="evidence" value="ECO:0000318"/>
    <property type="project" value="GO_Central"/>
</dbReference>
<dbReference type="CDD" id="cd07061">
    <property type="entry name" value="HP_HAP_like"/>
    <property type="match status" value="1"/>
</dbReference>
<dbReference type="Gene3D" id="3.40.50.1240">
    <property type="entry name" value="Phosphoglycerate mutase-like"/>
    <property type="match status" value="1"/>
</dbReference>
<dbReference type="InterPro" id="IPR033379">
    <property type="entry name" value="Acid_Pase_AS"/>
</dbReference>
<dbReference type="InterPro" id="IPR000560">
    <property type="entry name" value="His_Pase_clade-2"/>
</dbReference>
<dbReference type="InterPro" id="IPR029033">
    <property type="entry name" value="His_PPase_superfam"/>
</dbReference>
<dbReference type="InterPro" id="IPR050645">
    <property type="entry name" value="Histidine_acid_phosphatase"/>
</dbReference>
<dbReference type="PANTHER" id="PTHR11567:SF110">
    <property type="entry name" value="2-PHOSPHOXYLOSE PHOSPHATASE 1"/>
    <property type="match status" value="1"/>
</dbReference>
<dbReference type="PANTHER" id="PTHR11567">
    <property type="entry name" value="ACID PHOSPHATASE-RELATED"/>
    <property type="match status" value="1"/>
</dbReference>
<dbReference type="Pfam" id="PF00328">
    <property type="entry name" value="His_Phos_2"/>
    <property type="match status" value="1"/>
</dbReference>
<dbReference type="SUPFAM" id="SSF53254">
    <property type="entry name" value="Phosphoglycerate mutase-like"/>
    <property type="match status" value="1"/>
</dbReference>
<dbReference type="PROSITE" id="PS00616">
    <property type="entry name" value="HIS_ACID_PHOSPHAT_1"/>
    <property type="match status" value="1"/>
</dbReference>
<proteinExistence type="inferred from homology"/>
<sequence>MFSYFRKSQQKVEENQNGGGGDGRGSGIKVELQTNINSRDLKNEHSDPKFKFSPLRSTDVHLEDYDNEKYKLKFIQIVTRHGRRTPESNRTPLTMWMCNSMDHLISNKDSPRPNCNPGQLTVLGIVDQINVGKIYRKLFIDHLGFLDSQYNKDQIFIRSTNTTRTISSARSLMHGLYGGSFTDEQEKSPHHSSFLVKPDNEENMYPRNSKKLVFLKNLIKQHPKVIKENQLSELEKFTEKINKIFENSKPEESSFRARGFRSYAGLVNSFDCFRNNGLPIPKGLTKDIIQRMYEESAKEFKSARYFPEMSILGIGRFVDDLNKELKLKARNDPSVKDLKLSLYSGHDTTLAALLVGYDMYEDKIHPVTSSTLEFLLMQDKDYKEPEVVKITKSIEKELINHQYVKVIYNHKPIHIGPCKDKEVDGMCPLSEFLKISQSIIPTNYDEQSKLTQLDKKRYLSLIED</sequence>
<reference key="1">
    <citation type="journal article" date="2005" name="Nature">
        <title>The genome of the social amoeba Dictyostelium discoideum.</title>
        <authorList>
            <person name="Eichinger L."/>
            <person name="Pachebat J.A."/>
            <person name="Gloeckner G."/>
            <person name="Rajandream M.A."/>
            <person name="Sucgang R."/>
            <person name="Berriman M."/>
            <person name="Song J."/>
            <person name="Olsen R."/>
            <person name="Szafranski K."/>
            <person name="Xu Q."/>
            <person name="Tunggal B."/>
            <person name="Kummerfeld S."/>
            <person name="Madera M."/>
            <person name="Konfortov B.A."/>
            <person name="Rivero F."/>
            <person name="Bankier A.T."/>
            <person name="Lehmann R."/>
            <person name="Hamlin N."/>
            <person name="Davies R."/>
            <person name="Gaudet P."/>
            <person name="Fey P."/>
            <person name="Pilcher K."/>
            <person name="Chen G."/>
            <person name="Saunders D."/>
            <person name="Sodergren E.J."/>
            <person name="Davis P."/>
            <person name="Kerhornou A."/>
            <person name="Nie X."/>
            <person name="Hall N."/>
            <person name="Anjard C."/>
            <person name="Hemphill L."/>
            <person name="Bason N."/>
            <person name="Farbrother P."/>
            <person name="Desany B."/>
            <person name="Just E."/>
            <person name="Morio T."/>
            <person name="Rost R."/>
            <person name="Churcher C.M."/>
            <person name="Cooper J."/>
            <person name="Haydock S."/>
            <person name="van Driessche N."/>
            <person name="Cronin A."/>
            <person name="Goodhead I."/>
            <person name="Muzny D.M."/>
            <person name="Mourier T."/>
            <person name="Pain A."/>
            <person name="Lu M."/>
            <person name="Harper D."/>
            <person name="Lindsay R."/>
            <person name="Hauser H."/>
            <person name="James K.D."/>
            <person name="Quiles M."/>
            <person name="Madan Babu M."/>
            <person name="Saito T."/>
            <person name="Buchrieser C."/>
            <person name="Wardroper A."/>
            <person name="Felder M."/>
            <person name="Thangavelu M."/>
            <person name="Johnson D."/>
            <person name="Knights A."/>
            <person name="Loulseged H."/>
            <person name="Mungall K.L."/>
            <person name="Oliver K."/>
            <person name="Price C."/>
            <person name="Quail M.A."/>
            <person name="Urushihara H."/>
            <person name="Hernandez J."/>
            <person name="Rabbinowitsch E."/>
            <person name="Steffen D."/>
            <person name="Sanders M."/>
            <person name="Ma J."/>
            <person name="Kohara Y."/>
            <person name="Sharp S."/>
            <person name="Simmonds M.N."/>
            <person name="Spiegler S."/>
            <person name="Tivey A."/>
            <person name="Sugano S."/>
            <person name="White B."/>
            <person name="Walker D."/>
            <person name="Woodward J.R."/>
            <person name="Winckler T."/>
            <person name="Tanaka Y."/>
            <person name="Shaulsky G."/>
            <person name="Schleicher M."/>
            <person name="Weinstock G.M."/>
            <person name="Rosenthal A."/>
            <person name="Cox E.C."/>
            <person name="Chisholm R.L."/>
            <person name="Gibbs R.A."/>
            <person name="Loomis W.F."/>
            <person name="Platzer M."/>
            <person name="Kay R.R."/>
            <person name="Williams J.G."/>
            <person name="Dear P.H."/>
            <person name="Noegel A.A."/>
            <person name="Barrell B.G."/>
            <person name="Kuspa A."/>
        </authorList>
    </citation>
    <scope>NUCLEOTIDE SEQUENCE [LARGE SCALE GENOMIC DNA]</scope>
    <source>
        <strain>AX4</strain>
    </source>
</reference>
<name>Y4753_DICDI</name>
<keyword id="KW-0378">Hydrolase</keyword>
<keyword id="KW-1185">Reference proteome</keyword>
<organism>
    <name type="scientific">Dictyostelium discoideum</name>
    <name type="common">Social amoeba</name>
    <dbReference type="NCBI Taxonomy" id="44689"/>
    <lineage>
        <taxon>Eukaryota</taxon>
        <taxon>Amoebozoa</taxon>
        <taxon>Evosea</taxon>
        <taxon>Eumycetozoa</taxon>
        <taxon>Dictyostelia</taxon>
        <taxon>Dictyosteliales</taxon>
        <taxon>Dictyosteliaceae</taxon>
        <taxon>Dictyostelium</taxon>
    </lineage>
</organism>
<gene>
    <name type="ORF">DDB_G0284753</name>
</gene>
<protein>
    <recommendedName>
        <fullName>Probable acid phosphatase DDB_G0284753</fullName>
        <ecNumber>3.1.3.2</ecNumber>
    </recommendedName>
</protein>
<feature type="chain" id="PRO_0000369256" description="Probable acid phosphatase DDB_G0284753">
    <location>
        <begin position="1"/>
        <end position="464"/>
    </location>
</feature>
<feature type="region of interest" description="Disordered" evidence="2">
    <location>
        <begin position="1"/>
        <end position="29"/>
    </location>
</feature>
<feature type="region of interest" description="Disordered" evidence="2">
    <location>
        <begin position="180"/>
        <end position="202"/>
    </location>
</feature>
<feature type="compositionally biased region" description="Gly residues" evidence="2">
    <location>
        <begin position="17"/>
        <end position="26"/>
    </location>
</feature>
<feature type="active site" description="Nucleophile" evidence="1">
    <location>
        <position position="81"/>
    </location>
</feature>
<feature type="active site" description="Proton donor" evidence="1">
    <location>
        <position position="347"/>
    </location>
</feature>
<evidence type="ECO:0000250" key="1"/>
<evidence type="ECO:0000256" key="2">
    <source>
        <dbReference type="SAM" id="MobiDB-lite"/>
    </source>
</evidence>
<evidence type="ECO:0000305" key="3"/>
<comment type="catalytic activity">
    <reaction>
        <text>a phosphate monoester + H2O = an alcohol + phosphate</text>
        <dbReference type="Rhea" id="RHEA:15017"/>
        <dbReference type="ChEBI" id="CHEBI:15377"/>
        <dbReference type="ChEBI" id="CHEBI:30879"/>
        <dbReference type="ChEBI" id="CHEBI:43474"/>
        <dbReference type="ChEBI" id="CHEBI:67140"/>
        <dbReference type="EC" id="3.1.3.2"/>
    </reaction>
</comment>
<comment type="similarity">
    <text evidence="3">Belongs to the histidine acid phosphatase family.</text>
</comment>